<sequence>METSTQRTGSHLAQTAAARHSASSRGEAARVSSRDELAEMAAASQGNFEGKFESLDLAELAKKQPWWRTLFGQESGPSAEKYSVATQLLIGGVTGWCTGFIFQKVGKLAATAVGGGFFLLQLANHTGYIKVDWQRVEKDMKKAKEQLKIRKSNQIPTEVKSKAEEVVSFVKKNVLVTGGFFGGFLLGMAS</sequence>
<proteinExistence type="evidence at transcript level"/>
<protein>
    <recommendedName>
        <fullName evidence="1">FUN14 domain-containing protein 2</fullName>
    </recommendedName>
    <alternativeName>
        <fullName>Hepatitis C virus core-binding protein 6</fullName>
    </alternativeName>
</protein>
<organism>
    <name type="scientific">Bos taurus</name>
    <name type="common">Bovine</name>
    <dbReference type="NCBI Taxonomy" id="9913"/>
    <lineage>
        <taxon>Eukaryota</taxon>
        <taxon>Metazoa</taxon>
        <taxon>Chordata</taxon>
        <taxon>Craniata</taxon>
        <taxon>Vertebrata</taxon>
        <taxon>Euteleostomi</taxon>
        <taxon>Mammalia</taxon>
        <taxon>Eutheria</taxon>
        <taxon>Laurasiatheria</taxon>
        <taxon>Artiodactyla</taxon>
        <taxon>Ruminantia</taxon>
        <taxon>Pecora</taxon>
        <taxon>Bovidae</taxon>
        <taxon>Bovinae</taxon>
        <taxon>Bos</taxon>
    </lineage>
</organism>
<evidence type="ECO:0000250" key="1">
    <source>
        <dbReference type="UniProtKB" id="Q9BWH2"/>
    </source>
</evidence>
<evidence type="ECO:0000250" key="2">
    <source>
        <dbReference type="UniProtKB" id="Q9D6K8"/>
    </source>
</evidence>
<evidence type="ECO:0000255" key="3"/>
<evidence type="ECO:0000256" key="4">
    <source>
        <dbReference type="SAM" id="MobiDB-lite"/>
    </source>
</evidence>
<evidence type="ECO:0000305" key="5"/>
<keyword id="KW-0472">Membrane</keyword>
<keyword id="KW-0496">Mitochondrion</keyword>
<keyword id="KW-1000">Mitochondrion outer membrane</keyword>
<keyword id="KW-0539">Nucleus</keyword>
<keyword id="KW-0597">Phosphoprotein</keyword>
<keyword id="KW-1185">Reference proteome</keyword>
<keyword id="KW-0804">Transcription</keyword>
<keyword id="KW-0805">Transcription regulation</keyword>
<keyword id="KW-0812">Transmembrane</keyword>
<keyword id="KW-1133">Transmembrane helix</keyword>
<gene>
    <name evidence="1" type="primary">FUNDC2</name>
    <name type="synonym">HCBP6</name>
</gene>
<comment type="function">
    <text evidence="1 2">Binds directly and specifically 1,2-Diacyl-sn-glycero-3-phospho-(1'-myo-inositol-3',4',5'-bisphosphate) (PIP3) leading to the recruitment of PIP3 to mitochondria and may play a role in the regulation of the platelet activation via AKT/GSK3B/cGMP signaling pathways (By similarity). May act as transcription factor that regulates SREBP1 (isoform SREBP-1C) expression in order to modulate triglyceride (TG) homeostasis in hepatocytes (By similarity).</text>
</comment>
<comment type="subcellular location">
    <subcellularLocation>
        <location evidence="1">Mitochondrion outer membrane</location>
        <topology evidence="3">Multi-pass membrane protein</topology>
    </subcellularLocation>
    <subcellularLocation>
        <location evidence="1">Nucleus</location>
    </subcellularLocation>
</comment>
<comment type="similarity">
    <text evidence="5">Belongs to the FUN14 family.</text>
</comment>
<dbReference type="EMBL" id="AF375478">
    <property type="protein sequence ID" value="AAM46089.1"/>
    <property type="molecule type" value="mRNA"/>
</dbReference>
<dbReference type="EMBL" id="BC109698">
    <property type="protein sequence ID" value="AAI09699.1"/>
    <property type="molecule type" value="mRNA"/>
</dbReference>
<dbReference type="RefSeq" id="NP_776763.1">
    <property type="nucleotide sequence ID" value="NM_174338.4"/>
</dbReference>
<dbReference type="FunCoup" id="Q8MJN0">
    <property type="interactions" value="643"/>
</dbReference>
<dbReference type="STRING" id="9913.ENSBTAP00000022579"/>
<dbReference type="iPTMnet" id="Q8MJN0"/>
<dbReference type="PaxDb" id="9913-ENSBTAP00000022579"/>
<dbReference type="GeneID" id="281813"/>
<dbReference type="KEGG" id="bta:281813"/>
<dbReference type="CTD" id="65991"/>
<dbReference type="VEuPathDB" id="HostDB:ENSBTAG00000016977"/>
<dbReference type="eggNOG" id="KOG4099">
    <property type="taxonomic scope" value="Eukaryota"/>
</dbReference>
<dbReference type="HOGENOM" id="CLU_095425_2_0_1"/>
<dbReference type="InParanoid" id="Q8MJN0"/>
<dbReference type="OMA" id="VATTACH"/>
<dbReference type="OrthoDB" id="163794at2759"/>
<dbReference type="TreeFam" id="TF300280"/>
<dbReference type="Proteomes" id="UP000009136">
    <property type="component" value="Chromosome X"/>
</dbReference>
<dbReference type="Bgee" id="ENSBTAG00000016977">
    <property type="expression patterns" value="Expressed in semitendinosus and 105 other cell types or tissues"/>
</dbReference>
<dbReference type="GO" id="GO:0005741">
    <property type="term" value="C:mitochondrial outer membrane"/>
    <property type="evidence" value="ECO:0000318"/>
    <property type="project" value="GO_Central"/>
</dbReference>
<dbReference type="GO" id="GO:0005634">
    <property type="term" value="C:nucleus"/>
    <property type="evidence" value="ECO:0007669"/>
    <property type="project" value="UniProtKB-SubCell"/>
</dbReference>
<dbReference type="GO" id="GO:0005547">
    <property type="term" value="F:phosphatidylinositol-3,4,5-trisphosphate binding"/>
    <property type="evidence" value="ECO:0000250"/>
    <property type="project" value="UniProtKB"/>
</dbReference>
<dbReference type="GO" id="GO:0000422">
    <property type="term" value="P:autophagy of mitochondrion"/>
    <property type="evidence" value="ECO:0000318"/>
    <property type="project" value="GO_Central"/>
</dbReference>
<dbReference type="GO" id="GO:0035356">
    <property type="term" value="P:intracellular triglyceride homeostasis"/>
    <property type="evidence" value="ECO:0000250"/>
    <property type="project" value="UniProtKB"/>
</dbReference>
<dbReference type="GO" id="GO:0010543">
    <property type="term" value="P:regulation of platelet activation"/>
    <property type="evidence" value="ECO:0000250"/>
    <property type="project" value="UniProtKB"/>
</dbReference>
<dbReference type="InterPro" id="IPR007014">
    <property type="entry name" value="FUN14"/>
</dbReference>
<dbReference type="PANTHER" id="PTHR21346">
    <property type="entry name" value="FUN14 DOMAIN CONTAINING"/>
    <property type="match status" value="1"/>
</dbReference>
<dbReference type="PANTHER" id="PTHR21346:SF5">
    <property type="entry name" value="FUN14 DOMAIN-CONTAINING PROTEIN 2"/>
    <property type="match status" value="1"/>
</dbReference>
<dbReference type="Pfam" id="PF04930">
    <property type="entry name" value="FUN14"/>
    <property type="match status" value="1"/>
</dbReference>
<accession>Q8MJN0</accession>
<feature type="chain" id="PRO_0000314614" description="FUN14 domain-containing protein 2">
    <location>
        <begin position="1"/>
        <end position="190"/>
    </location>
</feature>
<feature type="topological domain" description="Cytoplasmic" evidence="1">
    <location>
        <begin position="1"/>
        <end position="81"/>
    </location>
</feature>
<feature type="transmembrane region" description="Helical" evidence="3">
    <location>
        <begin position="82"/>
        <end position="102"/>
    </location>
</feature>
<feature type="topological domain" description="Mitochondrial intermembrane" evidence="1">
    <location>
        <begin position="103"/>
        <end position="108"/>
    </location>
</feature>
<feature type="transmembrane region" description="Helical" evidence="3">
    <location>
        <begin position="109"/>
        <end position="129"/>
    </location>
</feature>
<feature type="topological domain" description="Cytoplasmic" evidence="1">
    <location>
        <begin position="130"/>
        <end position="165"/>
    </location>
</feature>
<feature type="transmembrane region" description="Helical" evidence="3">
    <location>
        <begin position="166"/>
        <end position="186"/>
    </location>
</feature>
<feature type="topological domain" description="Mitochondrial intermembrane" evidence="1">
    <location>
        <begin position="187"/>
        <end position="190"/>
    </location>
</feature>
<feature type="region of interest" description="Disordered" evidence="4">
    <location>
        <begin position="1"/>
        <end position="31"/>
    </location>
</feature>
<feature type="compositionally biased region" description="Polar residues" evidence="4">
    <location>
        <begin position="1"/>
        <end position="13"/>
    </location>
</feature>
<feature type="modified residue" description="Phosphoserine" evidence="1">
    <location>
        <position position="10"/>
    </location>
</feature>
<feature type="modified residue" description="Phosphoserine" evidence="1">
    <location>
        <position position="54"/>
    </location>
</feature>
<feature type="modified residue" description="Phosphoserine" evidence="1">
    <location>
        <position position="152"/>
    </location>
</feature>
<name>FUND2_BOVIN</name>
<reference key="1">
    <citation type="submission" date="2001-05" db="EMBL/GenBank/DDBJ databases">
        <title>Cloning and sequence analysis of cDNA encoding hepatitis C virus core-binding protein 6.</title>
        <authorList>
            <person name="Li K."/>
            <person name="Cheng J."/>
            <person name="Zhang L."/>
            <person name="Wang L."/>
            <person name="Lu Y."/>
            <person name="Wang G."/>
            <person name="Liu Y."/>
        </authorList>
    </citation>
    <scope>NUCLEOTIDE SEQUENCE [MRNA]</scope>
</reference>
<reference key="2">
    <citation type="submission" date="2005-11" db="EMBL/GenBank/DDBJ databases">
        <authorList>
            <consortium name="NIH - Mammalian Gene Collection (MGC) project"/>
        </authorList>
    </citation>
    <scope>NUCLEOTIDE SEQUENCE [LARGE SCALE MRNA]</scope>
    <source>
        <strain>Crossbred X Angus</strain>
        <tissue>Liver</tissue>
    </source>
</reference>